<evidence type="ECO:0000250" key="1">
    <source>
        <dbReference type="UniProtKB" id="P56761"/>
    </source>
</evidence>
<evidence type="ECO:0000255" key="2">
    <source>
        <dbReference type="HAMAP-Rule" id="MF_01383"/>
    </source>
</evidence>
<dbReference type="EC" id="1.10.3.9" evidence="2"/>
<dbReference type="EMBL" id="AJ627251">
    <property type="protein sequence ID" value="CAF28588.1"/>
    <property type="molecule type" value="Genomic_DNA"/>
</dbReference>
<dbReference type="RefSeq" id="YP_053150.1">
    <property type="nucleotide sequence ID" value="NC_006050.1"/>
</dbReference>
<dbReference type="SMR" id="Q6EW53"/>
<dbReference type="GeneID" id="2896143"/>
<dbReference type="GO" id="GO:0009535">
    <property type="term" value="C:chloroplast thylakoid membrane"/>
    <property type="evidence" value="ECO:0007669"/>
    <property type="project" value="UniProtKB-SubCell"/>
</dbReference>
<dbReference type="GO" id="GO:0009523">
    <property type="term" value="C:photosystem II"/>
    <property type="evidence" value="ECO:0007669"/>
    <property type="project" value="UniProtKB-KW"/>
</dbReference>
<dbReference type="GO" id="GO:0016168">
    <property type="term" value="F:chlorophyll binding"/>
    <property type="evidence" value="ECO:0007669"/>
    <property type="project" value="UniProtKB-UniRule"/>
</dbReference>
<dbReference type="GO" id="GO:0045156">
    <property type="term" value="F:electron transporter, transferring electrons within the cyclic electron transport pathway of photosynthesis activity"/>
    <property type="evidence" value="ECO:0007669"/>
    <property type="project" value="InterPro"/>
</dbReference>
<dbReference type="GO" id="GO:0005506">
    <property type="term" value="F:iron ion binding"/>
    <property type="evidence" value="ECO:0007669"/>
    <property type="project" value="UniProtKB-UniRule"/>
</dbReference>
<dbReference type="GO" id="GO:0010242">
    <property type="term" value="F:oxygen evolving activity"/>
    <property type="evidence" value="ECO:0007669"/>
    <property type="project" value="UniProtKB-EC"/>
</dbReference>
<dbReference type="GO" id="GO:0009772">
    <property type="term" value="P:photosynthetic electron transport in photosystem II"/>
    <property type="evidence" value="ECO:0007669"/>
    <property type="project" value="InterPro"/>
</dbReference>
<dbReference type="CDD" id="cd09288">
    <property type="entry name" value="Photosystem-II_D2"/>
    <property type="match status" value="1"/>
</dbReference>
<dbReference type="FunFam" id="1.20.85.10:FF:000001">
    <property type="entry name" value="photosystem II D2 protein-like"/>
    <property type="match status" value="1"/>
</dbReference>
<dbReference type="Gene3D" id="1.20.85.10">
    <property type="entry name" value="Photosystem II protein D1-like"/>
    <property type="match status" value="1"/>
</dbReference>
<dbReference type="HAMAP" id="MF_01383">
    <property type="entry name" value="PSII_PsbD_D2"/>
    <property type="match status" value="1"/>
</dbReference>
<dbReference type="InterPro" id="IPR055266">
    <property type="entry name" value="D1/D2"/>
</dbReference>
<dbReference type="InterPro" id="IPR036854">
    <property type="entry name" value="Photo_II_D1/D2_sf"/>
</dbReference>
<dbReference type="InterPro" id="IPR000484">
    <property type="entry name" value="Photo_RC_L/M"/>
</dbReference>
<dbReference type="InterPro" id="IPR055265">
    <property type="entry name" value="Photo_RC_L/M_CS"/>
</dbReference>
<dbReference type="InterPro" id="IPR005868">
    <property type="entry name" value="PSII_PsbD/D2"/>
</dbReference>
<dbReference type="NCBIfam" id="TIGR01152">
    <property type="entry name" value="psbD"/>
    <property type="match status" value="1"/>
</dbReference>
<dbReference type="PANTHER" id="PTHR33149:SF12">
    <property type="entry name" value="PHOTOSYSTEM II D2 PROTEIN"/>
    <property type="match status" value="1"/>
</dbReference>
<dbReference type="PANTHER" id="PTHR33149">
    <property type="entry name" value="PHOTOSYSTEM II PROTEIN D1"/>
    <property type="match status" value="1"/>
</dbReference>
<dbReference type="Pfam" id="PF00124">
    <property type="entry name" value="Photo_RC"/>
    <property type="match status" value="1"/>
</dbReference>
<dbReference type="PRINTS" id="PR00256">
    <property type="entry name" value="REACTNCENTRE"/>
</dbReference>
<dbReference type="SUPFAM" id="SSF81483">
    <property type="entry name" value="Bacterial photosystem II reaction centre, L and M subunits"/>
    <property type="match status" value="1"/>
</dbReference>
<dbReference type="PROSITE" id="PS00244">
    <property type="entry name" value="REACTION_CENTER"/>
    <property type="match status" value="1"/>
</dbReference>
<accession>Q6EW53</accession>
<comment type="function">
    <text evidence="2">Photosystem II (PSII) is a light-driven water:plastoquinone oxidoreductase that uses light energy to abstract electrons from H(2)O, generating O(2) and a proton gradient subsequently used for ATP formation. It consists of a core antenna complex that captures photons, and an electron transfer chain that converts photonic excitation into a charge separation. The D1/D2 (PsbA/PsbD) reaction center heterodimer binds P680, the primary electron donor of PSII as well as several subsequent electron acceptors. D2 is needed for assembly of a stable PSII complex.</text>
</comment>
<comment type="catalytic activity">
    <reaction evidence="2">
        <text>2 a plastoquinone + 4 hnu + 2 H2O = 2 a plastoquinol + O2</text>
        <dbReference type="Rhea" id="RHEA:36359"/>
        <dbReference type="Rhea" id="RHEA-COMP:9561"/>
        <dbReference type="Rhea" id="RHEA-COMP:9562"/>
        <dbReference type="ChEBI" id="CHEBI:15377"/>
        <dbReference type="ChEBI" id="CHEBI:15379"/>
        <dbReference type="ChEBI" id="CHEBI:17757"/>
        <dbReference type="ChEBI" id="CHEBI:30212"/>
        <dbReference type="ChEBI" id="CHEBI:62192"/>
        <dbReference type="EC" id="1.10.3.9"/>
    </reaction>
</comment>
<comment type="cofactor">
    <text evidence="2">The D1/D2 heterodimer binds P680, chlorophylls that are the primary electron donor of PSII, and subsequent electron acceptors. It shares a non-heme iron and each subunit binds pheophytin, quinone, additional chlorophylls, carotenoids and lipids. There is also a Cl(-1) ion associated with D1 and D2, which is required for oxygen evolution. The PSII complex binds additional chlorophylls, carotenoids and specific lipids.</text>
</comment>
<comment type="subunit">
    <text evidence="2">PSII is composed of 1 copy each of membrane proteins PsbA, PsbB, PsbC, PsbD, PsbE, PsbF, PsbH, PsbI, PsbJ, PsbK, PsbL, PsbM, PsbT, PsbX, PsbY, PsbZ, Psb30/Ycf12, at least 3 peripheral proteins of the oxygen-evolving complex and a large number of cofactors. It forms dimeric complexes.</text>
</comment>
<comment type="subcellular location">
    <subcellularLocation>
        <location evidence="2">Plastid</location>
        <location evidence="2">Chloroplast thylakoid membrane</location>
        <topology evidence="2">Multi-pass membrane protein</topology>
    </subcellularLocation>
</comment>
<comment type="miscellaneous">
    <text evidence="2">2 of the reaction center chlorophylls (ChlD1 and ChlD2) are entirely coordinated by water.</text>
</comment>
<comment type="similarity">
    <text evidence="2">Belongs to the reaction center PufL/M/PsbA/D family.</text>
</comment>
<protein>
    <recommendedName>
        <fullName evidence="2">Photosystem II D2 protein</fullName>
        <shortName evidence="2">PSII D2 protein</shortName>
        <ecNumber evidence="2">1.10.3.9</ecNumber>
    </recommendedName>
    <alternativeName>
        <fullName evidence="2">Photosystem Q(A) protein</fullName>
    </alternativeName>
</protein>
<organism>
    <name type="scientific">Nymphaea alba</name>
    <name type="common">White water-lily</name>
    <name type="synonym">Castalia alba</name>
    <dbReference type="NCBI Taxonomy" id="34301"/>
    <lineage>
        <taxon>Eukaryota</taxon>
        <taxon>Viridiplantae</taxon>
        <taxon>Streptophyta</taxon>
        <taxon>Embryophyta</taxon>
        <taxon>Tracheophyta</taxon>
        <taxon>Spermatophyta</taxon>
        <taxon>Magnoliopsida</taxon>
        <taxon>Nymphaeales</taxon>
        <taxon>Nymphaeaceae</taxon>
        <taxon>Nymphaea</taxon>
    </lineage>
</organism>
<geneLocation type="chloroplast"/>
<gene>
    <name evidence="2" type="primary">psbD</name>
</gene>
<sequence length="353" mass="39592">MTIALGRFTKEENDLFDIMDDWLRRDRFVFVGWSGLLLFPCAYFALGGWFTGTTFVTSWYTHGLASSYLEGCNFLTAAVSTPANSLAHSLLLLWGPEAQGDFTRWCQLGGLWTFVALHGAFGLIGFMLRQFELARSVQLRPYNAIAFSGPIAVFVSVFLIYPLGQSGWFFAPSFGVAAIFRFILFFQGFHNWTLNPFHMMGVAGVLGAALLCAIHGATVENTLFEDGDGANTFRAFNPTQAEETYSMVTANRFWSQIFGVAFSNKRWLHFFMLFVPVTGLWMSALGVVGLALNLRAYDFVSQEIRAAEDPEFETFYTKNILLNEGIRAWMAAQDQPHENLIFPEEVLPRGNAL</sequence>
<feature type="initiator methionine" description="Removed" evidence="1">
    <location>
        <position position="1"/>
    </location>
</feature>
<feature type="chain" id="PRO_0000359674" description="Photosystem II D2 protein">
    <location>
        <begin position="2"/>
        <end position="353"/>
    </location>
</feature>
<feature type="transmembrane region" description="Helical" evidence="2">
    <location>
        <begin position="41"/>
        <end position="61"/>
    </location>
</feature>
<feature type="transmembrane region" description="Helical" evidence="2">
    <location>
        <begin position="125"/>
        <end position="141"/>
    </location>
</feature>
<feature type="transmembrane region" description="Helical" evidence="2">
    <location>
        <begin position="153"/>
        <end position="166"/>
    </location>
</feature>
<feature type="transmembrane region" description="Helical" evidence="2">
    <location>
        <begin position="208"/>
        <end position="228"/>
    </location>
</feature>
<feature type="transmembrane region" description="Helical" evidence="2">
    <location>
        <begin position="279"/>
        <end position="295"/>
    </location>
</feature>
<feature type="binding site" description="axial binding residue" evidence="2">
    <location>
        <position position="118"/>
    </location>
    <ligand>
        <name>chlorophyll a</name>
        <dbReference type="ChEBI" id="CHEBI:58416"/>
        <label>ChlzD2</label>
    </ligand>
    <ligandPart>
        <name>Mg</name>
        <dbReference type="ChEBI" id="CHEBI:25107"/>
    </ligandPart>
</feature>
<feature type="binding site" evidence="2">
    <location>
        <position position="130"/>
    </location>
    <ligand>
        <name>pheophytin a</name>
        <dbReference type="ChEBI" id="CHEBI:136840"/>
        <label>D2</label>
    </ligand>
</feature>
<feature type="binding site" evidence="2">
    <location>
        <position position="143"/>
    </location>
    <ligand>
        <name>pheophytin a</name>
        <dbReference type="ChEBI" id="CHEBI:136840"/>
        <label>D2</label>
    </ligand>
</feature>
<feature type="binding site" description="axial binding residue" evidence="2">
    <location>
        <position position="198"/>
    </location>
    <ligand>
        <name>chlorophyll a</name>
        <dbReference type="ChEBI" id="CHEBI:58416"/>
        <label>PD2</label>
    </ligand>
    <ligandPart>
        <name>Mg</name>
        <dbReference type="ChEBI" id="CHEBI:25107"/>
    </ligandPart>
</feature>
<feature type="binding site" evidence="2">
    <location>
        <position position="215"/>
    </location>
    <ligand>
        <name>a plastoquinone</name>
        <dbReference type="ChEBI" id="CHEBI:17757"/>
        <label>Q(A)</label>
    </ligand>
</feature>
<feature type="binding site" evidence="2">
    <location>
        <position position="215"/>
    </location>
    <ligand>
        <name>Fe cation</name>
        <dbReference type="ChEBI" id="CHEBI:24875"/>
        <note>ligand shared with heterodimeric partner</note>
    </ligand>
</feature>
<feature type="binding site" evidence="2">
    <location>
        <position position="262"/>
    </location>
    <ligand>
        <name>a plastoquinone</name>
        <dbReference type="ChEBI" id="CHEBI:17757"/>
        <label>Q(A)</label>
    </ligand>
</feature>
<feature type="binding site" evidence="2">
    <location>
        <position position="269"/>
    </location>
    <ligand>
        <name>Fe cation</name>
        <dbReference type="ChEBI" id="CHEBI:24875"/>
        <note>ligand shared with heterodimeric partner</note>
    </ligand>
</feature>
<feature type="modified residue" description="N-acetylthreonine" evidence="1">
    <location>
        <position position="2"/>
    </location>
</feature>
<feature type="modified residue" description="Phosphothreonine" evidence="1">
    <location>
        <position position="2"/>
    </location>
</feature>
<reference key="1">
    <citation type="journal article" date="2004" name="Mol. Biol. Evol.">
        <title>The chloroplast genome of Nymphaea alba: whole-genome analyses and the problem of identifying the most basal angiosperm.</title>
        <authorList>
            <person name="Goremykin V.V."/>
            <person name="Hirsch-Ernst K.I."/>
            <person name="Woelfl S."/>
            <person name="Hellwig F.H."/>
        </authorList>
    </citation>
    <scope>NUCLEOTIDE SEQUENCE [LARGE SCALE GENOMIC DNA]</scope>
</reference>
<proteinExistence type="inferred from homology"/>
<name>PSBD_NYMAL</name>
<keyword id="KW-0007">Acetylation</keyword>
<keyword id="KW-0148">Chlorophyll</keyword>
<keyword id="KW-0150">Chloroplast</keyword>
<keyword id="KW-0157">Chromophore</keyword>
<keyword id="KW-0249">Electron transport</keyword>
<keyword id="KW-0408">Iron</keyword>
<keyword id="KW-0460">Magnesium</keyword>
<keyword id="KW-0472">Membrane</keyword>
<keyword id="KW-0479">Metal-binding</keyword>
<keyword id="KW-0560">Oxidoreductase</keyword>
<keyword id="KW-0597">Phosphoprotein</keyword>
<keyword id="KW-0602">Photosynthesis</keyword>
<keyword id="KW-0604">Photosystem II</keyword>
<keyword id="KW-0934">Plastid</keyword>
<keyword id="KW-0793">Thylakoid</keyword>
<keyword id="KW-0812">Transmembrane</keyword>
<keyword id="KW-1133">Transmembrane helix</keyword>
<keyword id="KW-0813">Transport</keyword>